<organism>
    <name type="scientific">Ovis aries</name>
    <name type="common">Sheep</name>
    <dbReference type="NCBI Taxonomy" id="9940"/>
    <lineage>
        <taxon>Eukaryota</taxon>
        <taxon>Metazoa</taxon>
        <taxon>Chordata</taxon>
        <taxon>Craniata</taxon>
        <taxon>Vertebrata</taxon>
        <taxon>Euteleostomi</taxon>
        <taxon>Mammalia</taxon>
        <taxon>Eutheria</taxon>
        <taxon>Laurasiatheria</taxon>
        <taxon>Artiodactyla</taxon>
        <taxon>Ruminantia</taxon>
        <taxon>Pecora</taxon>
        <taxon>Bovidae</taxon>
        <taxon>Caprinae</taxon>
        <taxon>Ovis</taxon>
    </lineage>
</organism>
<proteinExistence type="inferred from homology"/>
<feature type="signal peptide" evidence="4">
    <location>
        <begin position="1"/>
        <end position="24"/>
    </location>
</feature>
<feature type="chain" id="PRO_0000260430" description="Hepatocyte growth factor receptor">
    <location>
        <begin position="25"/>
        <end position="1384"/>
    </location>
</feature>
<feature type="topological domain" description="Extracellular" evidence="4">
    <location>
        <begin position="25"/>
        <end position="933"/>
    </location>
</feature>
<feature type="transmembrane region" description="Helical" evidence="4">
    <location>
        <begin position="934"/>
        <end position="956"/>
    </location>
</feature>
<feature type="topological domain" description="Cytoplasmic" evidence="4">
    <location>
        <begin position="957"/>
        <end position="1384"/>
    </location>
</feature>
<feature type="domain" description="Sema" evidence="6">
    <location>
        <begin position="27"/>
        <end position="516"/>
    </location>
</feature>
<feature type="domain" description="IPT/TIG 1">
    <location>
        <begin position="564"/>
        <end position="656"/>
    </location>
</feature>
<feature type="domain" description="IPT/TIG 2">
    <location>
        <begin position="658"/>
        <end position="740"/>
    </location>
</feature>
<feature type="domain" description="IPT/TIG 3">
    <location>
        <begin position="743"/>
        <end position="837"/>
    </location>
</feature>
<feature type="domain" description="Protein kinase" evidence="5">
    <location>
        <begin position="1079"/>
        <end position="1346"/>
    </location>
</feature>
<feature type="region of interest" description="Interaction with RANBP9" evidence="1">
    <location>
        <begin position="1213"/>
        <end position="1382"/>
    </location>
</feature>
<feature type="region of interest" description="Interaction with MUC20" evidence="1">
    <location>
        <begin position="1321"/>
        <end position="1360"/>
    </location>
</feature>
<feature type="active site" description="Proton acceptor" evidence="5 7">
    <location>
        <position position="1205"/>
    </location>
</feature>
<feature type="binding site" evidence="5">
    <location>
        <begin position="1085"/>
        <end position="1093"/>
    </location>
    <ligand>
        <name>ATP</name>
        <dbReference type="ChEBI" id="CHEBI:30616"/>
    </ligand>
</feature>
<feature type="binding site" evidence="5">
    <location>
        <position position="1111"/>
    </location>
    <ligand>
        <name>ATP</name>
        <dbReference type="ChEBI" id="CHEBI:30616"/>
    </ligand>
</feature>
<feature type="site" description="Cleavage" evidence="4">
    <location>
        <begin position="308"/>
        <end position="309"/>
    </location>
</feature>
<feature type="modified residue" description="Phosphoserine" evidence="2">
    <location>
        <position position="967"/>
    </location>
</feature>
<feature type="modified residue" description="Phosphothreonine" evidence="2">
    <location>
        <position position="978"/>
    </location>
</feature>
<feature type="modified residue" description="Phosphoserine" evidence="2">
    <location>
        <position position="991"/>
    </location>
</feature>
<feature type="modified residue" description="Phosphoserine" evidence="2">
    <location>
        <position position="998"/>
    </location>
</feature>
<feature type="modified residue" description="Phosphoserine" evidence="2">
    <location>
        <position position="1001"/>
    </location>
</feature>
<feature type="modified residue" description="Phosphotyrosine" evidence="2">
    <location>
        <position position="1004"/>
    </location>
</feature>
<feature type="modified residue" description="Phosphotyrosine" evidence="2">
    <location>
        <position position="1231"/>
    </location>
</feature>
<feature type="modified residue" description="Phosphotyrosine; by autocatalysis" evidence="2">
    <location>
        <position position="1235"/>
    </location>
</feature>
<feature type="modified residue" description="Phosphotyrosine; by autocatalysis" evidence="2">
    <location>
        <position position="1236"/>
    </location>
</feature>
<feature type="modified residue" description="Phosphothreonine" evidence="2">
    <location>
        <position position="1290"/>
    </location>
</feature>
<feature type="modified residue" description="Phosphotyrosine; by autocatalysis" evidence="2">
    <location>
        <position position="1350"/>
    </location>
</feature>
<feature type="modified residue" description="Phosphotyrosine; by autocatalysis" evidence="2">
    <location>
        <position position="1357"/>
    </location>
</feature>
<feature type="modified residue" description="Phosphotyrosine" evidence="2">
    <location>
        <position position="1366"/>
    </location>
</feature>
<feature type="glycosylation site" description="N-linked (GlcNAc...) asparagine" evidence="4">
    <location>
        <position position="45"/>
    </location>
</feature>
<feature type="glycosylation site" description="N-linked (GlcNAc...) asparagine" evidence="4">
    <location>
        <position position="106"/>
    </location>
</feature>
<feature type="glycosylation site" description="N-linked (GlcNAc...) asparagine" evidence="4">
    <location>
        <position position="149"/>
    </location>
</feature>
<feature type="glycosylation site" description="N-linked (GlcNAc...) asparagine" evidence="4">
    <location>
        <position position="203"/>
    </location>
</feature>
<feature type="glycosylation site" description="N-linked (GlcNAc...) asparagine" evidence="4">
    <location>
        <position position="359"/>
    </location>
</feature>
<feature type="glycosylation site" description="N-linked (GlcNAc...) asparagine" evidence="4">
    <location>
        <position position="400"/>
    </location>
</feature>
<feature type="glycosylation site" description="N-linked (GlcNAc...) asparagine" evidence="4">
    <location>
        <position position="406"/>
    </location>
</feature>
<feature type="glycosylation site" description="O-linked (Man) threonine" evidence="2">
    <location>
        <position position="583"/>
    </location>
</feature>
<feature type="glycosylation site" description="N-linked (GlcNAc...) asparagine" evidence="4">
    <location>
        <position position="608"/>
    </location>
</feature>
<feature type="glycosylation site" description="N-linked (GlcNAc...) asparagine" evidence="4">
    <location>
        <position position="636"/>
    </location>
</feature>
<feature type="glycosylation site" description="O-linked (Man) threonine" evidence="2">
    <location>
        <position position="677"/>
    </location>
</feature>
<feature type="glycosylation site" description="O-linked (Man) threonine" evidence="2">
    <location>
        <position position="762"/>
    </location>
</feature>
<feature type="glycosylation site" description="N-linked (GlcNAc...) asparagine" evidence="4">
    <location>
        <position position="786"/>
    </location>
</feature>
<feature type="glycosylation site" description="N-linked (GlcNAc...) asparagine" evidence="4">
    <location>
        <position position="880"/>
    </location>
</feature>
<feature type="glycosylation site" description="N-linked (GlcNAc...) asparagine" evidence="4">
    <location>
        <position position="931"/>
    </location>
</feature>
<feature type="disulfide bond" evidence="6">
    <location>
        <begin position="95"/>
        <end position="101"/>
    </location>
</feature>
<feature type="disulfide bond" evidence="6">
    <location>
        <begin position="98"/>
        <end position="160"/>
    </location>
</feature>
<feature type="disulfide bond" evidence="6">
    <location>
        <begin position="133"/>
        <end position="141"/>
    </location>
</feature>
<feature type="disulfide bond" evidence="6">
    <location>
        <begin position="173"/>
        <end position="176"/>
    </location>
</feature>
<feature type="disulfide bond" evidence="6">
    <location>
        <begin position="299"/>
        <end position="364"/>
    </location>
</feature>
<feature type="disulfide bond" evidence="6">
    <location>
        <begin position="386"/>
        <end position="398"/>
    </location>
</feature>
<feature type="disulfide bond" evidence="6">
    <location>
        <begin position="521"/>
        <end position="539"/>
    </location>
</feature>
<feature type="disulfide bond" evidence="6">
    <location>
        <begin position="527"/>
        <end position="562"/>
    </location>
</feature>
<feature type="disulfide bond" evidence="6">
    <location>
        <begin position="530"/>
        <end position="546"/>
    </location>
</feature>
<feature type="disulfide bond" evidence="6">
    <location>
        <begin position="542"/>
        <end position="552"/>
    </location>
</feature>
<protein>
    <recommendedName>
        <fullName>Hepatocyte growth factor receptor</fullName>
        <shortName>HGF receptor</shortName>
        <ecNumber>2.7.10.1</ecNumber>
    </recommendedName>
    <alternativeName>
        <fullName>HGF/SF receptor</fullName>
    </alternativeName>
    <alternativeName>
        <fullName>Proto-oncogene c-Met</fullName>
    </alternativeName>
    <alternativeName>
        <fullName>Scatter factor receptor</fullName>
        <shortName>SF receptor</shortName>
    </alternativeName>
    <alternativeName>
        <fullName>Tyrosine-protein kinase Met</fullName>
    </alternativeName>
</protein>
<accession>Q09YI9</accession>
<gene>
    <name type="primary">MET</name>
</gene>
<reference key="1">
    <citation type="submission" date="2006-09" db="EMBL/GenBank/DDBJ databases">
        <title>NISC comparative sequencing initiative.</title>
        <authorList>
            <person name="Antonellis A."/>
            <person name="Ayele K."/>
            <person name="Benjamin B."/>
            <person name="Blakesley R.W."/>
            <person name="Boakye A."/>
            <person name="Bouffard G.G."/>
            <person name="Brinkley C."/>
            <person name="Brooks S."/>
            <person name="Chu G."/>
            <person name="Coleman H."/>
            <person name="Engle J."/>
            <person name="Gestole M."/>
            <person name="Greene A."/>
            <person name="Guan X."/>
            <person name="Gupta J."/>
            <person name="Haghighi P."/>
            <person name="Han J."/>
            <person name="Hansen N."/>
            <person name="Ho S.-L."/>
            <person name="Hu P."/>
            <person name="Hunter G."/>
            <person name="Hurle B."/>
            <person name="Idol J.R."/>
            <person name="Kwong P."/>
            <person name="Laric P."/>
            <person name="Larson S."/>
            <person name="Lee-Lin S.-Q."/>
            <person name="Legaspi R."/>
            <person name="Madden M."/>
            <person name="Maduro Q.L."/>
            <person name="Maduro V.B."/>
            <person name="Margulies E.H."/>
            <person name="Masiello C."/>
            <person name="Maskeri B."/>
            <person name="McDowell J."/>
            <person name="Mojidi H.A."/>
            <person name="Mullikin J.C."/>
            <person name="Oestreicher J.S."/>
            <person name="Park M."/>
            <person name="Portnoy M.E."/>
            <person name="Prasad A."/>
            <person name="Puri O."/>
            <person name="Reddix-Dugue N."/>
            <person name="Schandler K."/>
            <person name="Schueler M.G."/>
            <person name="Sison C."/>
            <person name="Stantripop S."/>
            <person name="Stephen E."/>
            <person name="Taye A."/>
            <person name="Thomas J.W."/>
            <person name="Thomas P.J."/>
            <person name="Tsipouri V."/>
            <person name="Ung L."/>
            <person name="Vogt J.L."/>
            <person name="Wetherby K.D."/>
            <person name="Young A."/>
            <person name="Green E.D."/>
        </authorList>
    </citation>
    <scope>NUCLEOTIDE SEQUENCE [LARGE SCALE GENOMIC DNA]</scope>
</reference>
<dbReference type="EC" id="2.7.10.1"/>
<dbReference type="EMBL" id="DP000179">
    <property type="protein sequence ID" value="ABI75291.1"/>
    <property type="molecule type" value="Genomic_DNA"/>
</dbReference>
<dbReference type="RefSeq" id="NP_001104541.1">
    <property type="nucleotide sequence ID" value="NM_001111071.1"/>
</dbReference>
<dbReference type="RefSeq" id="XP_027824157.1">
    <property type="nucleotide sequence ID" value="XM_027968356.3"/>
</dbReference>
<dbReference type="RefSeq" id="XP_060270372.1">
    <property type="nucleotide sequence ID" value="XM_060414389.1"/>
</dbReference>
<dbReference type="RefSeq" id="XP_060270373.1">
    <property type="nucleotide sequence ID" value="XM_060414390.1"/>
</dbReference>
<dbReference type="SMR" id="Q09YI9"/>
<dbReference type="STRING" id="9940.ENSOARP00000000815"/>
<dbReference type="GlyCosmos" id="Q09YI9">
    <property type="glycosylation" value="12 sites, No reported glycans"/>
</dbReference>
<dbReference type="PaxDb" id="9940-ENSOARP00000000815"/>
<dbReference type="Ensembl" id="ENSOART00025006260">
    <property type="protein sequence ID" value="ENSOARP00025003016"/>
    <property type="gene ID" value="ENSOARG00025003813"/>
</dbReference>
<dbReference type="Ensembl" id="ENSOART00040008106">
    <property type="protein sequence ID" value="ENSOARP00040003976"/>
    <property type="gene ID" value="ENSOARG00040005009"/>
</dbReference>
<dbReference type="Ensembl" id="ENSOART00180001165">
    <property type="protein sequence ID" value="ENSOARP00180000702"/>
    <property type="gene ID" value="ENSOARG00180000688"/>
</dbReference>
<dbReference type="Ensembl" id="ENSOART00185001100">
    <property type="protein sequence ID" value="ENSOARP00185000462"/>
    <property type="gene ID" value="ENSOARG00185000717"/>
</dbReference>
<dbReference type="Ensembl" id="ENSOART00220069832">
    <property type="protein sequence ID" value="ENSOARP00220037901"/>
    <property type="gene ID" value="ENSOARG00220041891"/>
</dbReference>
<dbReference type="Ensembl" id="ENSOART00225027581">
    <property type="protein sequence ID" value="ENSOARP00225013428"/>
    <property type="gene ID" value="ENSOARG00225016829"/>
</dbReference>
<dbReference type="Ensembl" id="ENSOART00260011286">
    <property type="protein sequence ID" value="ENSOARP00260005539"/>
    <property type="gene ID" value="ENSOARG00260007020"/>
</dbReference>
<dbReference type="GeneID" id="443076"/>
<dbReference type="KEGG" id="oas:443076"/>
<dbReference type="CTD" id="4233"/>
<dbReference type="eggNOG" id="KOG1095">
    <property type="taxonomic scope" value="Eukaryota"/>
</dbReference>
<dbReference type="eggNOG" id="KOG3610">
    <property type="taxonomic scope" value="Eukaryota"/>
</dbReference>
<dbReference type="OrthoDB" id="9985181at2759"/>
<dbReference type="Proteomes" id="UP000002356">
    <property type="component" value="Unplaced"/>
</dbReference>
<dbReference type="GO" id="GO:0005886">
    <property type="term" value="C:plasma membrane"/>
    <property type="evidence" value="ECO:0007669"/>
    <property type="project" value="TreeGrafter"/>
</dbReference>
<dbReference type="GO" id="GO:0002116">
    <property type="term" value="C:semaphorin receptor complex"/>
    <property type="evidence" value="ECO:0007669"/>
    <property type="project" value="TreeGrafter"/>
</dbReference>
<dbReference type="GO" id="GO:0005524">
    <property type="term" value="F:ATP binding"/>
    <property type="evidence" value="ECO:0007669"/>
    <property type="project" value="UniProtKB-KW"/>
</dbReference>
<dbReference type="GO" id="GO:0017154">
    <property type="term" value="F:semaphorin receptor activity"/>
    <property type="evidence" value="ECO:0007669"/>
    <property type="project" value="InterPro"/>
</dbReference>
<dbReference type="GO" id="GO:0004714">
    <property type="term" value="F:transmembrane receptor protein tyrosine kinase activity"/>
    <property type="evidence" value="ECO:0007669"/>
    <property type="project" value="UniProtKB-EC"/>
</dbReference>
<dbReference type="GO" id="GO:0007169">
    <property type="term" value="P:cell surface receptor protein tyrosine kinase signaling pathway"/>
    <property type="evidence" value="ECO:0007669"/>
    <property type="project" value="InterPro"/>
</dbReference>
<dbReference type="GO" id="GO:0050918">
    <property type="term" value="P:positive chemotaxis"/>
    <property type="evidence" value="ECO:0000250"/>
    <property type="project" value="UniProtKB"/>
</dbReference>
<dbReference type="GO" id="GO:2001028">
    <property type="term" value="P:positive regulation of endothelial cell chemotaxis"/>
    <property type="evidence" value="ECO:0000250"/>
    <property type="project" value="UniProtKB"/>
</dbReference>
<dbReference type="GO" id="GO:0071526">
    <property type="term" value="P:semaphorin-plexin signaling pathway"/>
    <property type="evidence" value="ECO:0000250"/>
    <property type="project" value="UniProtKB"/>
</dbReference>
<dbReference type="CDD" id="cd00603">
    <property type="entry name" value="IPT_PCSR"/>
    <property type="match status" value="1"/>
</dbReference>
<dbReference type="CDD" id="cd01180">
    <property type="entry name" value="IPT_plexin_repeat1"/>
    <property type="match status" value="1"/>
</dbReference>
<dbReference type="CDD" id="cd05058">
    <property type="entry name" value="PTKc_Met_Ron"/>
    <property type="match status" value="1"/>
</dbReference>
<dbReference type="FunFam" id="1.10.510.10:FF:000093">
    <property type="entry name" value="Hepatocyte growth factor receptor"/>
    <property type="match status" value="1"/>
</dbReference>
<dbReference type="FunFam" id="2.130.10.10:FF:000088">
    <property type="entry name" value="Hepatocyte growth factor receptor"/>
    <property type="match status" value="1"/>
</dbReference>
<dbReference type="FunFam" id="2.60.40.10:FF:000213">
    <property type="entry name" value="Hepatocyte growth factor receptor"/>
    <property type="match status" value="1"/>
</dbReference>
<dbReference type="FunFam" id="2.60.40.10:FF:000400">
    <property type="entry name" value="Hepatocyte growth factor receptor"/>
    <property type="match status" value="1"/>
</dbReference>
<dbReference type="FunFam" id="2.60.40.10:FF:002708">
    <property type="entry name" value="Hepatocyte growth factor receptor"/>
    <property type="match status" value="1"/>
</dbReference>
<dbReference type="FunFam" id="3.30.200.20:FF:000188">
    <property type="entry name" value="Hepatocyte growth factor receptor"/>
    <property type="match status" value="1"/>
</dbReference>
<dbReference type="FunFam" id="3.30.1680.10:FF:000006">
    <property type="entry name" value="Macrophage-stimulating 1 receptor b"/>
    <property type="match status" value="1"/>
</dbReference>
<dbReference type="Gene3D" id="2.60.40.10">
    <property type="entry name" value="Immunoglobulins"/>
    <property type="match status" value="3"/>
</dbReference>
<dbReference type="Gene3D" id="3.30.200.20">
    <property type="entry name" value="Phosphorylase Kinase, domain 1"/>
    <property type="match status" value="1"/>
</dbReference>
<dbReference type="Gene3D" id="1.10.510.10">
    <property type="entry name" value="Transferase(Phosphotransferase) domain 1"/>
    <property type="match status" value="1"/>
</dbReference>
<dbReference type="Gene3D" id="2.130.10.10">
    <property type="entry name" value="YVTN repeat-like/Quinoprotein amine dehydrogenase"/>
    <property type="match status" value="1"/>
</dbReference>
<dbReference type="InterPro" id="IPR013783">
    <property type="entry name" value="Ig-like_fold"/>
</dbReference>
<dbReference type="InterPro" id="IPR014756">
    <property type="entry name" value="Ig_E-set"/>
</dbReference>
<dbReference type="InterPro" id="IPR002909">
    <property type="entry name" value="IPT_dom"/>
</dbReference>
<dbReference type="InterPro" id="IPR011009">
    <property type="entry name" value="Kinase-like_dom_sf"/>
</dbReference>
<dbReference type="InterPro" id="IPR031148">
    <property type="entry name" value="Plexin"/>
</dbReference>
<dbReference type="InterPro" id="IPR002165">
    <property type="entry name" value="Plexin_repeat"/>
</dbReference>
<dbReference type="InterPro" id="IPR000719">
    <property type="entry name" value="Prot_kinase_dom"/>
</dbReference>
<dbReference type="InterPro" id="IPR017441">
    <property type="entry name" value="Protein_kinase_ATP_BS"/>
</dbReference>
<dbReference type="InterPro" id="IPR016201">
    <property type="entry name" value="PSI"/>
</dbReference>
<dbReference type="InterPro" id="IPR001627">
    <property type="entry name" value="Semap_dom"/>
</dbReference>
<dbReference type="InterPro" id="IPR036352">
    <property type="entry name" value="Semap_dom_sf"/>
</dbReference>
<dbReference type="InterPro" id="IPR001245">
    <property type="entry name" value="Ser-Thr/Tyr_kinase_cat_dom"/>
</dbReference>
<dbReference type="InterPro" id="IPR008266">
    <property type="entry name" value="Tyr_kinase_AS"/>
</dbReference>
<dbReference type="InterPro" id="IPR020635">
    <property type="entry name" value="Tyr_kinase_cat_dom"/>
</dbReference>
<dbReference type="InterPro" id="IPR016244">
    <property type="entry name" value="Tyr_kinase_HGF/MSP_rcpt"/>
</dbReference>
<dbReference type="InterPro" id="IPR015943">
    <property type="entry name" value="WD40/YVTN_repeat-like_dom_sf"/>
</dbReference>
<dbReference type="PANTHER" id="PTHR22625:SF61">
    <property type="entry name" value="HEPATOCYTE GROWTH FACTOR RECEPTOR"/>
    <property type="match status" value="1"/>
</dbReference>
<dbReference type="PANTHER" id="PTHR22625">
    <property type="entry name" value="PLEXIN"/>
    <property type="match status" value="1"/>
</dbReference>
<dbReference type="Pfam" id="PF07714">
    <property type="entry name" value="PK_Tyr_Ser-Thr"/>
    <property type="match status" value="1"/>
</dbReference>
<dbReference type="Pfam" id="PF01437">
    <property type="entry name" value="PSI"/>
    <property type="match status" value="1"/>
</dbReference>
<dbReference type="Pfam" id="PF01403">
    <property type="entry name" value="Sema"/>
    <property type="match status" value="1"/>
</dbReference>
<dbReference type="Pfam" id="PF01833">
    <property type="entry name" value="TIG"/>
    <property type="match status" value="3"/>
</dbReference>
<dbReference type="PIRSF" id="PIRSF000617">
    <property type="entry name" value="TyrPK_HGF-R"/>
    <property type="match status" value="1"/>
</dbReference>
<dbReference type="PRINTS" id="PR00109">
    <property type="entry name" value="TYRKINASE"/>
</dbReference>
<dbReference type="SMART" id="SM00429">
    <property type="entry name" value="IPT"/>
    <property type="match status" value="4"/>
</dbReference>
<dbReference type="SMART" id="SM00423">
    <property type="entry name" value="PSI"/>
    <property type="match status" value="1"/>
</dbReference>
<dbReference type="SMART" id="SM00630">
    <property type="entry name" value="Sema"/>
    <property type="match status" value="1"/>
</dbReference>
<dbReference type="SMART" id="SM00219">
    <property type="entry name" value="TyrKc"/>
    <property type="match status" value="1"/>
</dbReference>
<dbReference type="SUPFAM" id="SSF81296">
    <property type="entry name" value="E set domains"/>
    <property type="match status" value="3"/>
</dbReference>
<dbReference type="SUPFAM" id="SSF103575">
    <property type="entry name" value="Plexin repeat"/>
    <property type="match status" value="1"/>
</dbReference>
<dbReference type="SUPFAM" id="SSF56112">
    <property type="entry name" value="Protein kinase-like (PK-like)"/>
    <property type="match status" value="1"/>
</dbReference>
<dbReference type="SUPFAM" id="SSF101912">
    <property type="entry name" value="Sema domain"/>
    <property type="match status" value="1"/>
</dbReference>
<dbReference type="PROSITE" id="PS00107">
    <property type="entry name" value="PROTEIN_KINASE_ATP"/>
    <property type="match status" value="1"/>
</dbReference>
<dbReference type="PROSITE" id="PS50011">
    <property type="entry name" value="PROTEIN_KINASE_DOM"/>
    <property type="match status" value="1"/>
</dbReference>
<dbReference type="PROSITE" id="PS00109">
    <property type="entry name" value="PROTEIN_KINASE_TYR"/>
    <property type="match status" value="1"/>
</dbReference>
<dbReference type="PROSITE" id="PS51004">
    <property type="entry name" value="SEMA"/>
    <property type="match status" value="1"/>
</dbReference>
<sequence length="1384" mass="154964">MKAPAVLAPGILVLLFTFVQKSNGECKEALVKSRMNVNMQYQLPNFTAETSIRNVVLHKHHIYLGAINYIYVLNDKDLQKVAEYKTGPVLEHPDCFPCQDCSHKANLSGGVWKDNINMALLVDTYYDDQLISCGSVHRGTCQRHVLPPNNTADIESEVHCMYSPQEDEETNQCPDCVVSALGTKVLLSEKERFINFFVGNTINSSYFPDHSLHSISVRRLKETQDGFKFLTDQSYIDVLPELQDSYPIKYVHAFESNHFIYFLTVQRETLDAQTFHTRIIRFCSADSGLHSYMEMPLECILTEKRRKRSTKQEVFNILQAAYVSKPGAQLARQIGANLNDDILYGVFAQSKPDSSEPMNRSAVCAFPVKYVNEFFNKIVNKNNVRCLQHFYGPNHEHCFNRTLLRNSSGCEVRNDEYRTEFTTALPRIDLFMGQFNQVLLTSISTFIKGDLTIANLGTSEGRFMQVVVSRSGSLTPHVNFPLDSHPVSPEVVVEHPLNQNGYTLVVTGKKITKIPLNGLGCEHFQSCSQCLSAPSFVQCGWCHDKCVRLEECPSGRWTQETCLPTIYKVFPTSAPLEGGTTLTVCGWDFGFKRNNKFDLKKTRVLLGNESCTLTLSESTTNMLKCTVGPATNEHFNMSIVISNSRGSVQYSMFSYVDPIITSISPNYGPKTGGTLLTLTGKHLNSGNSRHISIGGKTCTLKSVSYSILECYTPAQSAPTEFSVKLKIDLANREVNSFIYREDPIVYEIHPTKSFISGGSTITGVGKNLNSVSIIRMVINVHEAGKNFTVACQHRSNSEIICCTTPSLQQLNLQLPLKTKAFFMLDGIHSKYFDLIYVHNPVFKPFEKPVMISIGNENVLEIKGNDIDPEAVKGEVLKVGNKSCENIQSHSEAVLCTVPNDLLKLNSELNIEWKQAISSTVLGKVIVQPDQNFTGLIVGVVSVSIILLLLLGLFLWLKKRKQIKDLGSELVRYDARVHTPHLDRLVSARSVSPTTEMVSNESVDYRATFPEDQFPNSSQNGSCRQVQYPLTDLSPILTSGDSDISSPLLQNTVHIDLSALNPELVQAVQHVVIGPSSLIVHFNEVIGRGHFGCVYHGTLLDNDDKKIHCAVKSLNRITDIGEVSQFLTEGIIMKDFSHPNVLSLLGICLRSEGSPLVVLPYMKHGDLRNFIRNETHNPTVKDLIGFGLQVAKGMEYLASKKFVHRDLAARNCMLDEKFTVKVADFGLARDVYDKEYYSVHNKTGAKLPVKWMALESLQTQKFTTKSDVWSFGVLLWELMTRGAPPYPDVNTFDITVYLLQGRRLLQPEYCPDPLYEVMLKCWHPKAELRPSFSELVSRIAAIFSAFIGEHYVHVNATYVNVRCVAPYPSLLSSQENVSGEDDDDT</sequence>
<evidence type="ECO:0000250" key="1"/>
<evidence type="ECO:0000250" key="2">
    <source>
        <dbReference type="UniProtKB" id="P08581"/>
    </source>
</evidence>
<evidence type="ECO:0000250" key="3">
    <source>
        <dbReference type="UniProtKB" id="P16056"/>
    </source>
</evidence>
<evidence type="ECO:0000255" key="4"/>
<evidence type="ECO:0000255" key="5">
    <source>
        <dbReference type="PROSITE-ProRule" id="PRU00159"/>
    </source>
</evidence>
<evidence type="ECO:0000255" key="6">
    <source>
        <dbReference type="PROSITE-ProRule" id="PRU00352"/>
    </source>
</evidence>
<evidence type="ECO:0000255" key="7">
    <source>
        <dbReference type="PROSITE-ProRule" id="PRU10028"/>
    </source>
</evidence>
<comment type="function">
    <text evidence="1">Receptor tyrosine kinase that transduces signals from the extracellular matrix into the cytoplasm by binding to hepatocyte growth factor/HGF ligand. Regulates many physiological processes including proliferation, scattering, morphogenesis and survival. Ligand binding at the cell surface induces autophosphorylation of MET on its intracellular domain that provides docking sites for downstream signaling molecules. Following activation by ligand, interacts with the PI3-kinase subunit PIK3R1, PLCG1, SRC, GRB2, STAT3 or the adapter GAB1. Recruitment of these downstream effectors by MET leads to the activation of several signaling cascades including the RAS-ERK, PI3 kinase-AKT, or PLCgamma-PKC. The RAS-ERK activation is associated with the morphogenetic effects while PI3K/AKT coordinates prosurvival effects. During embryonic development, MET signaling plays a role in gastrulation, development and migration of muscles and neuronal precursors, angiogenesis and kidney formation. In adults, participates in wound healing as well as organ regeneration and tissue remodeling. Also promotes differentiation and proliferation of hematopoietic cells (By similarity).</text>
</comment>
<comment type="catalytic activity">
    <reaction evidence="7">
        <text>L-tyrosyl-[protein] + ATP = O-phospho-L-tyrosyl-[protein] + ADP + H(+)</text>
        <dbReference type="Rhea" id="RHEA:10596"/>
        <dbReference type="Rhea" id="RHEA-COMP:10136"/>
        <dbReference type="Rhea" id="RHEA-COMP:20101"/>
        <dbReference type="ChEBI" id="CHEBI:15378"/>
        <dbReference type="ChEBI" id="CHEBI:30616"/>
        <dbReference type="ChEBI" id="CHEBI:46858"/>
        <dbReference type="ChEBI" id="CHEBI:61978"/>
        <dbReference type="ChEBI" id="CHEBI:456216"/>
        <dbReference type="EC" id="2.7.10.1"/>
    </reaction>
</comment>
<comment type="activity regulation">
    <text evidence="1">In its inactive state, the C-terminal tail interacts with the catalytic domain and inhibits the kinase activity. Upon ligand binding, the C-terminal tail is displaced and becomes phosphorylated, thus increasing the kinase activity (By similarity).</text>
</comment>
<comment type="subunit">
    <text evidence="2 3">Heterodimer made of an alpha chain (50 kDa) and a beta chain (145 kDa) which are disulfide linked. Binds PLXNB1. Interacts when phosphorylated with downstream effectors including STAT3, PIK3R1, SRC, PCLG1, GRB2 and GAB1. Interacts with SPSB1, SPSB2 and SPSB4. Interacts with INPP5D/SHIP1. When phosphorylated at Tyr-1357, interacts with INPPL1/SHIP2. Interacts with RANBP9 and RANBP10, as well as SPSB1, SPSB2, SPSB3 and SPSB4. SPSB1 binding occurs in the presence and in the absence of HGF, however HGF treatment has a positive effect on this interaction. Interacts with MUC20; prevents interaction with GRB2 and suppresses hepatocyte growth factor-induced cell proliferation. Interacts with GRB10. Interacts with PTPN1 and PTPN2. Interacts with HSP90AA1 and HSP90AB1; the interaction suppresses MET kinase activity. Interacts with tensin TNS3 (By similarity). Interacts (when phosphorylated) with tensin TNS4 (via SH2 domain); the interaction increases MET protein stability by inhibiting MET endocytosis and subsequent lysosomal degradation (By similarity).</text>
</comment>
<comment type="subcellular location">
    <subcellularLocation>
        <location evidence="1">Membrane</location>
        <topology evidence="1">Single-pass type I membrane protein</topology>
    </subcellularLocation>
</comment>
<comment type="domain">
    <text evidence="1">The kinase domain is involved in SPSB1 binding.</text>
</comment>
<comment type="domain">
    <text evidence="1">The beta-propeller Sema domain mediates binding to HGF.</text>
</comment>
<comment type="PTM">
    <text evidence="2">Autophosphorylated in response to ligand binding on Tyr-1235 and Tyr-1236 in the kinase domain leading to further phosphorylation of Tyr-1350 and Tyr-1357 in the C-terminal multifunctional docking site. Dephosphorylated by PTPRJ at Tyr-1350 and Tyr-1366. Dephosphorylated by PTPN1 and PTPN2 (By similarity).</text>
</comment>
<comment type="PTM">
    <text evidence="2">Ubiquitinated. Ubiquitination by CBL regulates the receptor stability and activity through proteasomal degradation (By similarity).</text>
</comment>
<comment type="PTM">
    <text evidence="2">O-mannosylation of IPT/TIG domains by TMEM260 is required for protein maturation. O-mannosylated residues are composed of single mannose glycans that are not elongated or modified.</text>
</comment>
<comment type="similarity">
    <text evidence="5">Belongs to the protein kinase superfamily. Tyr protein kinase family.</text>
</comment>
<name>MET_SHEEP</name>
<keyword id="KW-0067">ATP-binding</keyword>
<keyword id="KW-1015">Disulfide bond</keyword>
<keyword id="KW-0325">Glycoprotein</keyword>
<keyword id="KW-0418">Kinase</keyword>
<keyword id="KW-0472">Membrane</keyword>
<keyword id="KW-0547">Nucleotide-binding</keyword>
<keyword id="KW-0597">Phosphoprotein</keyword>
<keyword id="KW-0656">Proto-oncogene</keyword>
<keyword id="KW-0675">Receptor</keyword>
<keyword id="KW-1185">Reference proteome</keyword>
<keyword id="KW-0677">Repeat</keyword>
<keyword id="KW-0732">Signal</keyword>
<keyword id="KW-0808">Transferase</keyword>
<keyword id="KW-0812">Transmembrane</keyword>
<keyword id="KW-1133">Transmembrane helix</keyword>
<keyword id="KW-0829">Tyrosine-protein kinase</keyword>
<keyword id="KW-0832">Ubl conjugation</keyword>